<keyword id="KW-0456">Lyase</keyword>
<gene>
    <name type="ordered locus">OE_3495R</name>
</gene>
<organism>
    <name type="scientific">Halobacterium salinarum (strain ATCC 29341 / DSM 671 / R1)</name>
    <dbReference type="NCBI Taxonomy" id="478009"/>
    <lineage>
        <taxon>Archaea</taxon>
        <taxon>Methanobacteriati</taxon>
        <taxon>Methanobacteriota</taxon>
        <taxon>Stenosarchaea group</taxon>
        <taxon>Halobacteria</taxon>
        <taxon>Halobacteriales</taxon>
        <taxon>Halobacteriaceae</taxon>
        <taxon>Halobacterium</taxon>
        <taxon>Halobacterium salinarum NRC-34001</taxon>
    </lineage>
</organism>
<accession>B0R6B9</accession>
<proteinExistence type="inferred from homology"/>
<sequence length="91" mass="10489">MSDRLDDDTISDRLPDDWIHDGDAITRTYTFEEYLDGVAFASEVGDLADEAFHHPEITIRYDEVEVRFTDHEAGGVTSQDIELARRTDDRR</sequence>
<dbReference type="EC" id="4.2.1.96" evidence="1"/>
<dbReference type="EMBL" id="AM774415">
    <property type="protein sequence ID" value="CAP14288.1"/>
    <property type="molecule type" value="Genomic_DNA"/>
</dbReference>
<dbReference type="RefSeq" id="WP_010903295.1">
    <property type="nucleotide sequence ID" value="NC_010364.1"/>
</dbReference>
<dbReference type="SMR" id="B0R6B9"/>
<dbReference type="EnsemblBacteria" id="CAP14288">
    <property type="protein sequence ID" value="CAP14288"/>
    <property type="gene ID" value="OE_3495R"/>
</dbReference>
<dbReference type="KEGG" id="hsl:OE_3495R"/>
<dbReference type="HOGENOM" id="CLU_081974_4_3_2"/>
<dbReference type="PhylomeDB" id="B0R6B9"/>
<dbReference type="Proteomes" id="UP000001321">
    <property type="component" value="Chromosome"/>
</dbReference>
<dbReference type="GO" id="GO:0008124">
    <property type="term" value="F:4-alpha-hydroxytetrahydrobiopterin dehydratase activity"/>
    <property type="evidence" value="ECO:0007669"/>
    <property type="project" value="UniProtKB-UniRule"/>
</dbReference>
<dbReference type="GO" id="GO:0006729">
    <property type="term" value="P:tetrahydrobiopterin biosynthetic process"/>
    <property type="evidence" value="ECO:0007669"/>
    <property type="project" value="InterPro"/>
</dbReference>
<dbReference type="CDD" id="cd00488">
    <property type="entry name" value="PCD_DCoH"/>
    <property type="match status" value="1"/>
</dbReference>
<dbReference type="Gene3D" id="3.30.1360.20">
    <property type="entry name" value="Transcriptional coactivator/pterin dehydratase"/>
    <property type="match status" value="1"/>
</dbReference>
<dbReference type="HAMAP" id="MF_00434">
    <property type="entry name" value="Pterin_4_alpha"/>
    <property type="match status" value="1"/>
</dbReference>
<dbReference type="InterPro" id="IPR036428">
    <property type="entry name" value="PCD_sf"/>
</dbReference>
<dbReference type="InterPro" id="IPR001533">
    <property type="entry name" value="Pterin_deHydtase"/>
</dbReference>
<dbReference type="NCBIfam" id="NF002017">
    <property type="entry name" value="PRK00823.1-2"/>
    <property type="match status" value="1"/>
</dbReference>
<dbReference type="PANTHER" id="PTHR12599">
    <property type="entry name" value="PTERIN-4-ALPHA-CARBINOLAMINE DEHYDRATASE"/>
    <property type="match status" value="1"/>
</dbReference>
<dbReference type="PANTHER" id="PTHR12599:SF0">
    <property type="entry name" value="PTERIN-4-ALPHA-CARBINOLAMINE DEHYDRATASE"/>
    <property type="match status" value="1"/>
</dbReference>
<dbReference type="Pfam" id="PF01329">
    <property type="entry name" value="Pterin_4a"/>
    <property type="match status" value="1"/>
</dbReference>
<dbReference type="SUPFAM" id="SSF55248">
    <property type="entry name" value="PCD-like"/>
    <property type="match status" value="1"/>
</dbReference>
<name>PHS_HALS3</name>
<reference key="1">
    <citation type="journal article" date="2008" name="Genomics">
        <title>Evolution in the laboratory: the genome of Halobacterium salinarum strain R1 compared to that of strain NRC-1.</title>
        <authorList>
            <person name="Pfeiffer F."/>
            <person name="Schuster S.C."/>
            <person name="Broicher A."/>
            <person name="Falb M."/>
            <person name="Palm P."/>
            <person name="Rodewald K."/>
            <person name="Ruepp A."/>
            <person name="Soppa J."/>
            <person name="Tittor J."/>
            <person name="Oesterhelt D."/>
        </authorList>
    </citation>
    <scope>NUCLEOTIDE SEQUENCE [LARGE SCALE GENOMIC DNA]</scope>
    <source>
        <strain>ATCC 29341 / DSM 671 / R1</strain>
    </source>
</reference>
<feature type="chain" id="PRO_1000192947" description="Putative pterin-4-alpha-carbinolamine dehydratase">
    <location>
        <begin position="1"/>
        <end position="91"/>
    </location>
</feature>
<comment type="catalytic activity">
    <reaction evidence="1">
        <text>(4aS,6R)-4a-hydroxy-L-erythro-5,6,7,8-tetrahydrobiopterin = (6R)-L-erythro-6,7-dihydrobiopterin + H2O</text>
        <dbReference type="Rhea" id="RHEA:11920"/>
        <dbReference type="ChEBI" id="CHEBI:15377"/>
        <dbReference type="ChEBI" id="CHEBI:15642"/>
        <dbReference type="ChEBI" id="CHEBI:43120"/>
        <dbReference type="EC" id="4.2.1.96"/>
    </reaction>
</comment>
<comment type="similarity">
    <text evidence="1">Belongs to the pterin-4-alpha-carbinolamine dehydratase family.</text>
</comment>
<evidence type="ECO:0000255" key="1">
    <source>
        <dbReference type="HAMAP-Rule" id="MF_00434"/>
    </source>
</evidence>
<protein>
    <recommendedName>
        <fullName evidence="1">Putative pterin-4-alpha-carbinolamine dehydratase</fullName>
        <shortName evidence="1">PHS</shortName>
        <ecNumber evidence="1">4.2.1.96</ecNumber>
    </recommendedName>
    <alternativeName>
        <fullName evidence="1">4-alpha-hydroxy-tetrahydropterin dehydratase</fullName>
    </alternativeName>
    <alternativeName>
        <fullName evidence="1">Pterin carbinolamine dehydratase</fullName>
        <shortName evidence="1">PCD</shortName>
    </alternativeName>
</protein>